<organismHost>
    <name type="scientific">Cynanchum acutum</name>
    <dbReference type="NCBI Taxonomy" id="185024"/>
</organismHost>
<organismHost>
    <name type="scientific">Malva parviflora</name>
    <name type="common">Little mallow</name>
    <name type="synonym">Cheeseweed mallow</name>
    <dbReference type="NCBI Taxonomy" id="145753"/>
</organismHost>
<organismHost>
    <name type="scientific">Solanum lycopersicum</name>
    <name type="common">Tomato</name>
    <name type="synonym">Lycopersicon esculentum</name>
    <dbReference type="NCBI Taxonomy" id="4081"/>
</organismHost>
<name>REN_TYLCI</name>
<keyword id="KW-0945">Host-virus interaction</keyword>
<keyword id="KW-1185">Reference proteome</keyword>
<gene>
    <name type="ORF">C3</name>
    <name type="ORF">L3</name>
</gene>
<dbReference type="EMBL" id="X15656">
    <property type="protein sequence ID" value="CAA33690.1"/>
    <property type="molecule type" value="Genomic_DNA"/>
</dbReference>
<dbReference type="PIR" id="B40779">
    <property type="entry name" value="QQCVC3"/>
</dbReference>
<dbReference type="Proteomes" id="UP000007547">
    <property type="component" value="Genome"/>
</dbReference>
<dbReference type="GO" id="GO:0016032">
    <property type="term" value="P:viral process"/>
    <property type="evidence" value="ECO:0007669"/>
    <property type="project" value="InterPro"/>
</dbReference>
<dbReference type="InterPro" id="IPR000657">
    <property type="entry name" value="Gemini_AL3"/>
</dbReference>
<dbReference type="Pfam" id="PF01407">
    <property type="entry name" value="Gemini_AL3"/>
    <property type="match status" value="1"/>
</dbReference>
<dbReference type="PRINTS" id="PR00231">
    <property type="entry name" value="GEMCOATAL3"/>
</dbReference>
<accession>P27265</accession>
<feature type="chain" id="PRO_0000222247" description="Replication enhancer protein">
    <location>
        <begin position="1"/>
        <end position="134"/>
    </location>
</feature>
<feature type="mutagenesis site" description="Severely reduced levels of viral DNA." evidence="2">
    <original>YFK</original>
    <variation>AAA</variation>
    <location>
        <begin position="28"/>
        <end position="30"/>
    </location>
</feature>
<feature type="mutagenesis site" description="Severely reduced levels of viral DNA." evidence="2">
    <original>QIRFNHN</original>
    <variation>AAAAAAA</variation>
    <location>
        <begin position="49"/>
        <end position="55"/>
    </location>
</feature>
<feature type="mutagenesis site" description="Severely reduced levels of viral DNA." evidence="2">
    <original>FLDFRIWTTL</original>
    <variation>ALNAARIAA</variation>
    <location>
        <begin position="66"/>
        <end position="75"/>
    </location>
</feature>
<feature type="mutagenesis site" description="Severely reduced levels of viral DNA." evidence="2">
    <original>RVFR</original>
    <variation>AAAA</variation>
    <location>
        <begin position="84"/>
        <end position="87"/>
    </location>
</feature>
<feature type="mutagenesis site" description="Severely reduced levels of viral DNA." evidence="2">
    <original>LKYLD</original>
    <variation>AAAAA</variation>
    <location>
        <begin position="91"/>
        <end position="95"/>
    </location>
</feature>
<comment type="function">
    <text evidence="1">Increases viral DNA accumulation. Enhances infectivity and symptom expression (By similarity).</text>
</comment>
<comment type="subunit">
    <text evidence="2">Homooligomer. Interacts with the replication-associated protein (REP). Interacts with host proliferating cell nuclear antigen (PCNA). Interacts with host retinoblastoma-related protein 1 (RBR1), and may thereby deregulate the host cell cycle. Oligomerization and interaction with PCNA are necessary for optimal replication enhancement.</text>
</comment>
<comment type="similarity">
    <text evidence="3">Belongs to the geminiviridae replication enhancer protein family.</text>
</comment>
<evidence type="ECO:0000250" key="1"/>
<evidence type="ECO:0000269" key="2">
    <source>
    </source>
</evidence>
<evidence type="ECO:0000305" key="3"/>
<protein>
    <recommendedName>
        <fullName>Replication enhancer protein</fullName>
        <shortName>REn</shortName>
    </recommendedName>
    <alternativeName>
        <fullName>15.6 kDa protein</fullName>
    </alternativeName>
    <alternativeName>
        <fullName>Protein C3</fullName>
    </alternativeName>
    <alternativeName>
        <fullName>Protein L3</fullName>
    </alternativeName>
</protein>
<sequence>MDSRTGELITAPQAENGVFIWEINNPLYFKITEHSQRPFLMNHDIISIQIRFNHNIRKVMGIHKCFLDFRIWTTLQPQTGHFLRVFRYEVLKYLDSLGVISINNVIRAVDHVLYDVLENTINVTETHDIKYKFY</sequence>
<proteinExistence type="evidence at protein level"/>
<reference key="1">
    <citation type="journal article" date="1991" name="Virology">
        <title>Tomato yellow leaf curl virus: a whitefly-transmitted geminivirus with a single genomic component.</title>
        <authorList>
            <person name="Navot N."/>
            <person name="Pichersky E."/>
            <person name="Zeidan M."/>
            <person name="Zamir D."/>
            <person name="Czosnek H."/>
        </authorList>
    </citation>
    <scope>NUCLEOTIDE SEQUENCE [GENOMIC DNA]</scope>
</reference>
<reference key="2">
    <citation type="journal article" date="2005" name="J. Virol.">
        <title>Geminivirus C3 protein: replication enhancement and protein interactions.</title>
        <authorList>
            <person name="Settlage S.B."/>
            <person name="See R.G."/>
            <person name="Hanley-Bowdoin L."/>
        </authorList>
    </citation>
    <scope>CHARACTERIZATION</scope>
    <scope>INTERACTION WITH THE REPLICATION-ASSOCIATED PROTEIN</scope>
    <scope>INTERACTION WITH SOLANUM LYCOPERSICUM PCNA</scope>
    <scope>INTERACTION WITH ZEA MAYS RBR1</scope>
    <scope>MUTAGENESIS OF 28-TYR--LYS-30; 49-GLN--ASN-55; 66-PHE--THR-75; 84-ARG--ARG-87 AND 91-LEU--ASP-95</scope>
    <source>
        <strain>Isolate Dominican Republic</strain>
    </source>
</reference>
<organism>
    <name type="scientific">Tomato yellow leaf curl virus (strain Israel)</name>
    <name type="common">TYLCV</name>
    <dbReference type="NCBI Taxonomy" id="66366"/>
    <lineage>
        <taxon>Viruses</taxon>
        <taxon>Monodnaviria</taxon>
        <taxon>Shotokuvirae</taxon>
        <taxon>Cressdnaviricota</taxon>
        <taxon>Repensiviricetes</taxon>
        <taxon>Geplafuvirales</taxon>
        <taxon>Geminiviridae</taxon>
        <taxon>Begomovirus</taxon>
        <taxon>Tomato yellow leaf curl virus</taxon>
    </lineage>
</organism>